<organism>
    <name type="scientific">Streptococcus pyogenes serotype M3 (strain SSI-1)</name>
    <dbReference type="NCBI Taxonomy" id="193567"/>
    <lineage>
        <taxon>Bacteria</taxon>
        <taxon>Bacillati</taxon>
        <taxon>Bacillota</taxon>
        <taxon>Bacilli</taxon>
        <taxon>Lactobacillales</taxon>
        <taxon>Streptococcaceae</taxon>
        <taxon>Streptococcus</taxon>
    </lineage>
</organism>
<proteinExistence type="inferred from homology"/>
<comment type="catalytic activity">
    <reaction evidence="1">
        <text>aldehydo-D-galactose 6-phosphate = keto-D-tagatose 6-phosphate</text>
        <dbReference type="Rhea" id="RHEA:13033"/>
        <dbReference type="ChEBI" id="CHEBI:58255"/>
        <dbReference type="ChEBI" id="CHEBI:134283"/>
        <dbReference type="EC" id="5.3.1.26"/>
    </reaction>
</comment>
<comment type="pathway">
    <text evidence="1">Carbohydrate metabolism; D-galactose 6-phosphate degradation; D-tagatose 6-phosphate from D-galactose 6-phosphate: step 1/1.</text>
</comment>
<comment type="subunit">
    <text evidence="1">Heteromultimeric protein consisting of LacA and LacB.</text>
</comment>
<comment type="similarity">
    <text evidence="1">Belongs to the LacAB/RpiB family.</text>
</comment>
<evidence type="ECO:0000255" key="1">
    <source>
        <dbReference type="HAMAP-Rule" id="MF_01555"/>
    </source>
</evidence>
<keyword id="KW-0413">Isomerase</keyword>
<keyword id="KW-0423">Lactose metabolism</keyword>
<sequence>MAIILGADAHGNALKELIKSFLQEESYDIIDVTDINSDFIDNTLAVAKAVNEAEGRLGIMVDAYGAGPFMVATKLKGMVAAEVSDERSAYMTRGHNNARMITIGAEIVGPELAKNIVKGFVTGPYDGGRHQIRVDMLNKMA</sequence>
<reference key="1">
    <citation type="journal article" date="2003" name="Genome Res.">
        <title>Genome sequence of an M3 strain of Streptococcus pyogenes reveals a large-scale genomic rearrangement in invasive strains and new insights into phage evolution.</title>
        <authorList>
            <person name="Nakagawa I."/>
            <person name="Kurokawa K."/>
            <person name="Yamashita A."/>
            <person name="Nakata M."/>
            <person name="Tomiyasu Y."/>
            <person name="Okahashi N."/>
            <person name="Kawabata S."/>
            <person name="Yamazaki K."/>
            <person name="Shiba T."/>
            <person name="Yasunaga T."/>
            <person name="Hayashi H."/>
            <person name="Hattori M."/>
            <person name="Hamada S."/>
        </authorList>
    </citation>
    <scope>NUCLEOTIDE SEQUENCE [LARGE SCALE GENOMIC DNA]</scope>
    <source>
        <strain>SSI-1</strain>
    </source>
</reference>
<accession>P0DC05</accession>
<accession>Q79YA2</accession>
<accession>Q8K651</accession>
<dbReference type="EC" id="5.3.1.26" evidence="1"/>
<dbReference type="EMBL" id="BA000034">
    <property type="protein sequence ID" value="BAC63477.1"/>
    <property type="molecule type" value="Genomic_DNA"/>
</dbReference>
<dbReference type="SMR" id="P0DC05"/>
<dbReference type="KEGG" id="sps:SPs0382"/>
<dbReference type="HOGENOM" id="CLU_091396_4_2_9"/>
<dbReference type="UniPathway" id="UPA00702">
    <property type="reaction ID" value="UER00714"/>
</dbReference>
<dbReference type="GO" id="GO:0050044">
    <property type="term" value="F:galactose-6-phosphate isomerase activity"/>
    <property type="evidence" value="ECO:0007669"/>
    <property type="project" value="UniProtKB-UniRule"/>
</dbReference>
<dbReference type="GO" id="GO:0004751">
    <property type="term" value="F:ribose-5-phosphate isomerase activity"/>
    <property type="evidence" value="ECO:0007669"/>
    <property type="project" value="TreeGrafter"/>
</dbReference>
<dbReference type="GO" id="GO:0019316">
    <property type="term" value="P:D-allose catabolic process"/>
    <property type="evidence" value="ECO:0007669"/>
    <property type="project" value="TreeGrafter"/>
</dbReference>
<dbReference type="GO" id="GO:0019388">
    <property type="term" value="P:galactose catabolic process"/>
    <property type="evidence" value="ECO:0007669"/>
    <property type="project" value="UniProtKB-UniPathway"/>
</dbReference>
<dbReference type="GO" id="GO:0019512">
    <property type="term" value="P:lactose catabolic process via tagatose-6-phosphate"/>
    <property type="evidence" value="ECO:0007669"/>
    <property type="project" value="UniProtKB-UniRule"/>
</dbReference>
<dbReference type="GO" id="GO:0009052">
    <property type="term" value="P:pentose-phosphate shunt, non-oxidative branch"/>
    <property type="evidence" value="ECO:0007669"/>
    <property type="project" value="TreeGrafter"/>
</dbReference>
<dbReference type="Gene3D" id="3.40.1400.10">
    <property type="entry name" value="Sugar-phosphate isomerase, RpiB/LacA/LacB"/>
    <property type="match status" value="1"/>
</dbReference>
<dbReference type="HAMAP" id="MF_01555">
    <property type="entry name" value="LacA"/>
    <property type="match status" value="1"/>
</dbReference>
<dbReference type="InterPro" id="IPR004783">
    <property type="entry name" value="LacA"/>
</dbReference>
<dbReference type="InterPro" id="IPR003500">
    <property type="entry name" value="RpiB_LacA_LacB"/>
</dbReference>
<dbReference type="InterPro" id="IPR036569">
    <property type="entry name" value="RpiB_LacA_LacB_sf"/>
</dbReference>
<dbReference type="NCBIfam" id="TIGR01118">
    <property type="entry name" value="lacA"/>
    <property type="match status" value="1"/>
</dbReference>
<dbReference type="NCBIfam" id="NF006380">
    <property type="entry name" value="PRK08621.1"/>
    <property type="match status" value="1"/>
</dbReference>
<dbReference type="NCBIfam" id="NF009257">
    <property type="entry name" value="PRK12613.1"/>
    <property type="match status" value="1"/>
</dbReference>
<dbReference type="NCBIfam" id="TIGR00689">
    <property type="entry name" value="rpiB_lacA_lacB"/>
    <property type="match status" value="1"/>
</dbReference>
<dbReference type="PANTHER" id="PTHR30345:SF5">
    <property type="entry name" value="GALACTOSE-6-PHOSPHATE ISOMERASE SUBUNIT LACA"/>
    <property type="match status" value="1"/>
</dbReference>
<dbReference type="PANTHER" id="PTHR30345">
    <property type="entry name" value="RIBOSE-5-PHOSPHATE ISOMERASE B"/>
    <property type="match status" value="1"/>
</dbReference>
<dbReference type="Pfam" id="PF02502">
    <property type="entry name" value="LacAB_rpiB"/>
    <property type="match status" value="1"/>
</dbReference>
<dbReference type="PIRSF" id="PIRSF005384">
    <property type="entry name" value="RpiB_LacA_B"/>
    <property type="match status" value="1"/>
</dbReference>
<dbReference type="SUPFAM" id="SSF89623">
    <property type="entry name" value="Ribose/Galactose isomerase RpiB/AlsB"/>
    <property type="match status" value="1"/>
</dbReference>
<name>LACA1_STRPQ</name>
<feature type="chain" id="PRO_0000411390" description="Galactose-6-phosphate isomerase subunit LacA 1">
    <location>
        <begin position="1"/>
        <end position="141"/>
    </location>
</feature>
<gene>
    <name evidence="1" type="primary">lacA1</name>
    <name type="synonym">lacA.1</name>
    <name type="ordered locus">SPs0382</name>
</gene>
<protein>
    <recommendedName>
        <fullName evidence="1">Galactose-6-phosphate isomerase subunit LacA 1</fullName>
        <ecNumber evidence="1">5.3.1.26</ecNumber>
    </recommendedName>
</protein>